<protein>
    <recommendedName>
        <fullName>Voltage-gated potassium channel subunit beta-1</fullName>
        <ecNumber evidence="2">1.1.1.-</ecNumber>
    </recommendedName>
    <alternativeName>
        <fullName>K(+) channel subunit beta-1</fullName>
    </alternativeName>
    <alternativeName>
        <fullName>Kv-beta-1</fullName>
    </alternativeName>
</protein>
<sequence>MQVSIACTEHNLKSRNGEDRLLSKQSSTAPNVVNAARAKFRTVAIIARSLGTFTPQHHISLKESTAKQTGMKYRNLGKSGLRVSCLGLGTWVTFGGQISDEVAERLMTIAYESGVNLFDTAEVYAAGKAEVILGSIIKKKGWRRSSLVITTKLYWGGKAETERGLSRKHIIEGLKGSLQRLQLEYVDVVFANRPDSNTPMEEIVRAMTHVINQGMAMYWGTSRWSAMEIMEAYSVARQFNMIPPVCEQAEYHLFQREKVEVQLPELYHKIGVGAMTWSPLACGIISGKYGNGVPESSRASLKCYQWLKERIVSEEGRKQQNKLKDLSPIAERLGCTLPQLAVAWCLRNEGVSSVLLGSSTPEQLIENLGAIQVLPKMTSHVVNEIDNILRNKPYSKKDYRS</sequence>
<reference key="1">
    <citation type="submission" date="2005-06" db="EMBL/GenBank/DDBJ databases">
        <title>Ion channels in ocular epithelia.</title>
        <authorList>
            <person name="Rae J.L."/>
        </authorList>
    </citation>
    <scope>NUCLEOTIDE SEQUENCE [MRNA]</scope>
    <source>
        <tissue>Lens epithelium</tissue>
    </source>
</reference>
<reference key="2">
    <citation type="submission" date="2006-08" db="EMBL/GenBank/DDBJ databases">
        <authorList>
            <consortium name="NIH - Mammalian Gene Collection (MGC) project"/>
        </authorList>
    </citation>
    <scope>NUCLEOTIDE SEQUENCE [LARGE SCALE MRNA]</scope>
    <source>
        <strain>Hereford</strain>
        <tissue>Basal ganglia</tissue>
    </source>
</reference>
<feature type="chain" id="PRO_0000148738" description="Voltage-gated potassium channel subunit beta-1">
    <location>
        <begin position="1"/>
        <end position="401"/>
    </location>
</feature>
<feature type="active site" description="Proton donor/acceptor" evidence="1">
    <location>
        <position position="124"/>
    </location>
</feature>
<feature type="binding site" evidence="1">
    <location>
        <position position="90"/>
    </location>
    <ligand>
        <name>NADP(+)</name>
        <dbReference type="ChEBI" id="CHEBI:58349"/>
    </ligand>
</feature>
<feature type="binding site" evidence="1">
    <location>
        <position position="91"/>
    </location>
    <ligand>
        <name>NADP(+)</name>
        <dbReference type="ChEBI" id="CHEBI:58349"/>
    </ligand>
</feature>
<feature type="binding site" evidence="1">
    <location>
        <position position="97"/>
    </location>
    <ligand>
        <name>NADP(+)</name>
        <dbReference type="ChEBI" id="CHEBI:58349"/>
    </ligand>
</feature>
<feature type="binding site" evidence="1">
    <location>
        <position position="119"/>
    </location>
    <ligand>
        <name>NADP(+)</name>
        <dbReference type="ChEBI" id="CHEBI:58349"/>
    </ligand>
</feature>
<feature type="binding site" evidence="1">
    <location>
        <position position="192"/>
    </location>
    <ligand>
        <name>NADP(+)</name>
        <dbReference type="ChEBI" id="CHEBI:58349"/>
    </ligand>
</feature>
<feature type="binding site" evidence="1">
    <location>
        <position position="222"/>
    </location>
    <ligand>
        <name>NADP(+)</name>
        <dbReference type="ChEBI" id="CHEBI:58349"/>
    </ligand>
</feature>
<feature type="binding site" evidence="1">
    <location>
        <position position="223"/>
    </location>
    <ligand>
        <name>NADP(+)</name>
        <dbReference type="ChEBI" id="CHEBI:58349"/>
    </ligand>
</feature>
<feature type="binding site" evidence="1">
    <location>
        <position position="248"/>
    </location>
    <ligand>
        <name>NADP(+)</name>
        <dbReference type="ChEBI" id="CHEBI:58349"/>
    </ligand>
</feature>
<feature type="binding site" evidence="1">
    <location>
        <position position="277"/>
    </location>
    <ligand>
        <name>NADP(+)</name>
        <dbReference type="ChEBI" id="CHEBI:58349"/>
    </ligand>
</feature>
<feature type="binding site" evidence="1">
    <location>
        <position position="278"/>
    </location>
    <ligand>
        <name>NADP(+)</name>
        <dbReference type="ChEBI" id="CHEBI:58349"/>
    </ligand>
</feature>
<feature type="binding site" evidence="1">
    <location>
        <position position="279"/>
    </location>
    <ligand>
        <name>NADP(+)</name>
        <dbReference type="ChEBI" id="CHEBI:58349"/>
    </ligand>
</feature>
<feature type="binding site" evidence="1">
    <location>
        <position position="280"/>
    </location>
    <ligand>
        <name>NADP(+)</name>
        <dbReference type="ChEBI" id="CHEBI:58349"/>
    </ligand>
</feature>
<feature type="binding site" evidence="1">
    <location>
        <position position="281"/>
    </location>
    <ligand>
        <name>NADP(+)</name>
        <dbReference type="ChEBI" id="CHEBI:58349"/>
    </ligand>
</feature>
<feature type="binding site" evidence="1">
    <location>
        <position position="282"/>
    </location>
    <ligand>
        <name>NADP(+)</name>
        <dbReference type="ChEBI" id="CHEBI:58349"/>
    </ligand>
</feature>
<feature type="binding site" evidence="1">
    <location>
        <position position="288"/>
    </location>
    <ligand>
        <name>NADP(+)</name>
        <dbReference type="ChEBI" id="CHEBI:58349"/>
    </ligand>
</feature>
<feature type="binding site" evidence="1">
    <location>
        <position position="298"/>
    </location>
    <ligand>
        <name>NADP(+)</name>
        <dbReference type="ChEBI" id="CHEBI:58349"/>
    </ligand>
</feature>
<feature type="binding site" evidence="1">
    <location>
        <position position="357"/>
    </location>
    <ligand>
        <name>NADP(+)</name>
        <dbReference type="ChEBI" id="CHEBI:58349"/>
    </ligand>
</feature>
<feature type="binding site" evidence="1">
    <location>
        <position position="359"/>
    </location>
    <ligand>
        <name>NADP(+)</name>
        <dbReference type="ChEBI" id="CHEBI:58349"/>
    </ligand>
</feature>
<feature type="binding site" evidence="1">
    <location>
        <position position="363"/>
    </location>
    <ligand>
        <name>NADP(+)</name>
        <dbReference type="ChEBI" id="CHEBI:58349"/>
    </ligand>
</feature>
<feature type="binding site" evidence="1">
    <location>
        <position position="366"/>
    </location>
    <ligand>
        <name>NADP(+)</name>
        <dbReference type="ChEBI" id="CHEBI:58349"/>
    </ligand>
</feature>
<feature type="binding site" evidence="1">
    <location>
        <position position="367"/>
    </location>
    <ligand>
        <name>NADP(+)</name>
        <dbReference type="ChEBI" id="CHEBI:58349"/>
    </ligand>
</feature>
<proteinExistence type="evidence at transcript level"/>
<dbReference type="EC" id="1.1.1.-" evidence="2"/>
<dbReference type="EMBL" id="DQ083328">
    <property type="protein sequence ID" value="AAY82471.1"/>
    <property type="molecule type" value="mRNA"/>
</dbReference>
<dbReference type="EMBL" id="BC122624">
    <property type="protein sequence ID" value="AAI22625.1"/>
    <property type="molecule type" value="mRNA"/>
</dbReference>
<dbReference type="RefSeq" id="NP_001020507.1">
    <property type="nucleotide sequence ID" value="NM_001025336.2"/>
</dbReference>
<dbReference type="SMR" id="Q4PJK1"/>
<dbReference type="BioGRID" id="182744">
    <property type="interactions" value="1"/>
</dbReference>
<dbReference type="FunCoup" id="Q4PJK1">
    <property type="interactions" value="695"/>
</dbReference>
<dbReference type="STRING" id="9913.ENSBTAP00000054768"/>
<dbReference type="PaxDb" id="9913-ENSBTAP00000054768"/>
<dbReference type="Ensembl" id="ENSBTAT00000024576.5">
    <property type="protein sequence ID" value="ENSBTAP00000024576.4"/>
    <property type="gene ID" value="ENSBTAG00000018465.7"/>
</dbReference>
<dbReference type="GeneID" id="526133"/>
<dbReference type="KEGG" id="bta:526133"/>
<dbReference type="CTD" id="7881"/>
<dbReference type="VEuPathDB" id="HostDB:ENSBTAG00000018465"/>
<dbReference type="VGNC" id="VGNC:30427">
    <property type="gene designation" value="KCNAB1"/>
</dbReference>
<dbReference type="eggNOG" id="KOG1575">
    <property type="taxonomic scope" value="Eukaryota"/>
</dbReference>
<dbReference type="GeneTree" id="ENSGT00940000156760"/>
<dbReference type="HOGENOM" id="CLU_023205_2_0_1"/>
<dbReference type="InParanoid" id="Q4PJK1"/>
<dbReference type="OMA" id="MWAGPYG"/>
<dbReference type="OrthoDB" id="1720422at2759"/>
<dbReference type="Reactome" id="R-BTA-1296072">
    <property type="pathway name" value="Voltage gated Potassium channels"/>
</dbReference>
<dbReference type="Proteomes" id="UP000009136">
    <property type="component" value="Chromosome 1"/>
</dbReference>
<dbReference type="Bgee" id="ENSBTAG00000018465">
    <property type="expression patterns" value="Expressed in trachea and 102 other cell types or tissues"/>
</dbReference>
<dbReference type="GO" id="GO:0009898">
    <property type="term" value="C:cytoplasmic side of plasma membrane"/>
    <property type="evidence" value="ECO:0000250"/>
    <property type="project" value="UniProtKB"/>
</dbReference>
<dbReference type="GO" id="GO:0005829">
    <property type="term" value="C:cytosol"/>
    <property type="evidence" value="ECO:0000250"/>
    <property type="project" value="UniProtKB"/>
</dbReference>
<dbReference type="GO" id="GO:0044224">
    <property type="term" value="C:juxtaparanode region of axon"/>
    <property type="evidence" value="ECO:0000318"/>
    <property type="project" value="GO_Central"/>
</dbReference>
<dbReference type="GO" id="GO:0034705">
    <property type="term" value="C:potassium channel complex"/>
    <property type="evidence" value="ECO:0000250"/>
    <property type="project" value="UniProtKB"/>
</dbReference>
<dbReference type="GO" id="GO:0008076">
    <property type="term" value="C:voltage-gated potassium channel complex"/>
    <property type="evidence" value="ECO:0000318"/>
    <property type="project" value="GO_Central"/>
</dbReference>
<dbReference type="GO" id="GO:0004033">
    <property type="term" value="F:aldo-keto reductase (NADPH) activity"/>
    <property type="evidence" value="ECO:0000250"/>
    <property type="project" value="UniProtKB"/>
</dbReference>
<dbReference type="GO" id="GO:0004090">
    <property type="term" value="F:carbonyl reductase (NADPH) activity"/>
    <property type="evidence" value="ECO:0007669"/>
    <property type="project" value="RHEA"/>
</dbReference>
<dbReference type="GO" id="GO:0070402">
    <property type="term" value="F:NADPH binding"/>
    <property type="evidence" value="ECO:0000250"/>
    <property type="project" value="UniProtKB"/>
</dbReference>
<dbReference type="GO" id="GO:0015459">
    <property type="term" value="F:potassium channel regulator activity"/>
    <property type="evidence" value="ECO:0000250"/>
    <property type="project" value="UniProtKB"/>
</dbReference>
<dbReference type="GO" id="GO:0044325">
    <property type="term" value="F:transmembrane transporter binding"/>
    <property type="evidence" value="ECO:0000318"/>
    <property type="project" value="GO_Central"/>
</dbReference>
<dbReference type="GO" id="GO:0005249">
    <property type="term" value="F:voltage-gated potassium channel activity"/>
    <property type="evidence" value="ECO:0007669"/>
    <property type="project" value="InterPro"/>
</dbReference>
<dbReference type="GO" id="GO:1902259">
    <property type="term" value="P:regulation of delayed rectifier potassium channel activity"/>
    <property type="evidence" value="ECO:0000250"/>
    <property type="project" value="UniProtKB"/>
</dbReference>
<dbReference type="GO" id="GO:1901379">
    <property type="term" value="P:regulation of potassium ion transmembrane transport"/>
    <property type="evidence" value="ECO:0000250"/>
    <property type="project" value="UniProtKB"/>
</dbReference>
<dbReference type="CDD" id="cd19159">
    <property type="entry name" value="AKR_KCAB1B_AKR6A3-like"/>
    <property type="match status" value="1"/>
</dbReference>
<dbReference type="FunFam" id="3.20.20.100:FF:000001">
    <property type="entry name" value="voltage-gated potassium channel subunit beta-2 isoform X2"/>
    <property type="match status" value="1"/>
</dbReference>
<dbReference type="Gene3D" id="3.20.20.100">
    <property type="entry name" value="NADP-dependent oxidoreductase domain"/>
    <property type="match status" value="1"/>
</dbReference>
<dbReference type="InterPro" id="IPR005983">
    <property type="entry name" value="K_chnl_volt-dep_bsu_KCNAB"/>
</dbReference>
<dbReference type="InterPro" id="IPR005399">
    <property type="entry name" value="K_chnl_volt-dep_bsu_KCNAB-rel"/>
</dbReference>
<dbReference type="InterPro" id="IPR005400">
    <property type="entry name" value="K_chnl_volt-dep_bsu_KCNAB1"/>
</dbReference>
<dbReference type="InterPro" id="IPR023210">
    <property type="entry name" value="NADP_OxRdtase_dom"/>
</dbReference>
<dbReference type="InterPro" id="IPR036812">
    <property type="entry name" value="NADP_OxRdtase_dom_sf"/>
</dbReference>
<dbReference type="NCBIfam" id="TIGR01293">
    <property type="entry name" value="Kv_beta"/>
    <property type="match status" value="1"/>
</dbReference>
<dbReference type="PANTHER" id="PTHR43150">
    <property type="entry name" value="HYPERKINETIC, ISOFORM M"/>
    <property type="match status" value="1"/>
</dbReference>
<dbReference type="PANTHER" id="PTHR43150:SF7">
    <property type="entry name" value="VOLTAGE-GATED POTASSIUM CHANNEL SUBUNIT BETA-1"/>
    <property type="match status" value="1"/>
</dbReference>
<dbReference type="Pfam" id="PF00248">
    <property type="entry name" value="Aldo_ket_red"/>
    <property type="match status" value="1"/>
</dbReference>
<dbReference type="PRINTS" id="PR01578">
    <property type="entry name" value="KCNAB1CHANEL"/>
</dbReference>
<dbReference type="PRINTS" id="PR01577">
    <property type="entry name" value="KCNABCHANNEL"/>
</dbReference>
<dbReference type="SUPFAM" id="SSF51430">
    <property type="entry name" value="NAD(P)-linked oxidoreductase"/>
    <property type="match status" value="1"/>
</dbReference>
<keyword id="KW-1003">Cell membrane</keyword>
<keyword id="KW-0963">Cytoplasm</keyword>
<keyword id="KW-0406">Ion transport</keyword>
<keyword id="KW-0472">Membrane</keyword>
<keyword id="KW-0521">NADP</keyword>
<keyword id="KW-0560">Oxidoreductase</keyword>
<keyword id="KW-0630">Potassium</keyword>
<keyword id="KW-0633">Potassium transport</keyword>
<keyword id="KW-1185">Reference proteome</keyword>
<keyword id="KW-0813">Transport</keyword>
<name>KCAB1_BOVIN</name>
<organism>
    <name type="scientific">Bos taurus</name>
    <name type="common">Bovine</name>
    <dbReference type="NCBI Taxonomy" id="9913"/>
    <lineage>
        <taxon>Eukaryota</taxon>
        <taxon>Metazoa</taxon>
        <taxon>Chordata</taxon>
        <taxon>Craniata</taxon>
        <taxon>Vertebrata</taxon>
        <taxon>Euteleostomi</taxon>
        <taxon>Mammalia</taxon>
        <taxon>Eutheria</taxon>
        <taxon>Laurasiatheria</taxon>
        <taxon>Artiodactyla</taxon>
        <taxon>Ruminantia</taxon>
        <taxon>Pecora</taxon>
        <taxon>Bovidae</taxon>
        <taxon>Bovinae</taxon>
        <taxon>Bos</taxon>
    </lineage>
</organism>
<evidence type="ECO:0000250" key="1">
    <source>
        <dbReference type="UniProtKB" id="P62483"/>
    </source>
</evidence>
<evidence type="ECO:0000250" key="2">
    <source>
        <dbReference type="UniProtKB" id="P63144"/>
    </source>
</evidence>
<evidence type="ECO:0000250" key="3">
    <source>
        <dbReference type="UniProtKB" id="Q14722"/>
    </source>
</evidence>
<evidence type="ECO:0000305" key="4"/>
<comment type="function">
    <text evidence="2 3">Regulatory subunit of the voltage-gated potassium (Kv) channels composed of pore-forming and potassium-conducting alpha subunits and of regulatory beta subunits. The beta-1/KCNAB1 cytoplasmic subunit mediates closure of delayed rectifier potassium channels by physically obstructing the pore via its N-terminal domain and increases the speed of channel closure for other family members. Promotes the inactivation of KCNA1, KCNA2, KCNA4, KCNA5 and KCNA6 alpha subunit-containing channels (By similarity). Displays nicotinamide adenine dinucleotide phosphate (NADPH)-dependent aldoketoreductase activity by catalyzing the NADPH-dependent reduction of a variety of endogenous aldehydes and ketones (By similarity). The binding of NADPH is required for efficient down-regulation of potassium channel activity (By similarity). Oxidation of the bound NADPH restrains N-terminal domain from blocking the channel, thereby decreasing N-type inactivation of potassium channel activity (By similarity).</text>
</comment>
<comment type="catalytic activity">
    <reaction evidence="2">
        <text>a primary alcohol + NADP(+) = an aldehyde + NADPH + H(+)</text>
        <dbReference type="Rhea" id="RHEA:15937"/>
        <dbReference type="ChEBI" id="CHEBI:15378"/>
        <dbReference type="ChEBI" id="CHEBI:15734"/>
        <dbReference type="ChEBI" id="CHEBI:17478"/>
        <dbReference type="ChEBI" id="CHEBI:57783"/>
        <dbReference type="ChEBI" id="CHEBI:58349"/>
    </reaction>
    <physiologicalReaction direction="right-to-left" evidence="2">
        <dbReference type="Rhea" id="RHEA:15939"/>
    </physiologicalReaction>
</comment>
<comment type="catalytic activity">
    <reaction evidence="2">
        <text>a secondary alcohol + NADP(+) = a ketone + NADPH + H(+)</text>
        <dbReference type="Rhea" id="RHEA:19257"/>
        <dbReference type="ChEBI" id="CHEBI:15378"/>
        <dbReference type="ChEBI" id="CHEBI:17087"/>
        <dbReference type="ChEBI" id="CHEBI:35681"/>
        <dbReference type="ChEBI" id="CHEBI:57783"/>
        <dbReference type="ChEBI" id="CHEBI:58349"/>
    </reaction>
    <physiologicalReaction direction="right-to-left" evidence="2">
        <dbReference type="Rhea" id="RHEA:19259"/>
    </physiologicalReaction>
</comment>
<comment type="subunit">
    <text evidence="2 3 4">Homotetramer (By similarity). Interaction with tetrameric potassium channel alpha subunits gives rise to a heterooctamer (Probable). Identified in potassium channel complexes containing KCNA1, KCNA2, KCNA4, KCNA5, KCNA6, KCNAB1 and KCNAB2 (By similarity). Part of a complex containing KCNA1, KCNA4 and LGI1; interaction with LGI1 inhibits down-regulation of KCNA1 channel activity. Interacts with the dimer formed by GNB1 and GNG2; this enhances KCNA1 binding. Interacts with SQSTM1 (By similarity).</text>
</comment>
<comment type="subcellular location">
    <subcellularLocation>
        <location evidence="3">Cytoplasm</location>
    </subcellularLocation>
    <subcellularLocation>
        <location evidence="2">Membrane</location>
        <topology evidence="2">Peripheral membrane protein</topology>
        <orientation evidence="2">Cytoplasmic side</orientation>
    </subcellularLocation>
    <subcellularLocation>
        <location evidence="3">Cell membrane</location>
        <topology evidence="3">Peripheral membrane protein</topology>
        <orientation evidence="3">Cytoplasmic side</orientation>
    </subcellularLocation>
    <text evidence="3">Recruited to the cytoplasmic side of the cell membrane via its interaction with pore-forming potassium channel alpha subunits.</text>
</comment>
<comment type="domain">
    <text evidence="3">The N-terminal domain of the beta subunit mediates closure of delayed rectifier potassium channels by physically obstructing the pore.</text>
</comment>
<comment type="similarity">
    <text evidence="4">Belongs to the shaker potassium channel beta subunit family.</text>
</comment>
<accession>Q4PJK1</accession>
<accession>Q05B86</accession>
<gene>
    <name type="primary">KCNAB1</name>
</gene>